<feature type="chain" id="PRO_0000080598" description="Ubiquitin carboxyl-terminal hydrolase 13">
    <location>
        <begin position="1"/>
        <end position="747"/>
    </location>
</feature>
<feature type="domain" description="USP">
    <location>
        <begin position="140"/>
        <end position="668"/>
    </location>
</feature>
<feature type="region of interest" description="Disordered" evidence="3">
    <location>
        <begin position="172"/>
        <end position="305"/>
    </location>
</feature>
<feature type="region of interest" description="Disordered" evidence="3">
    <location>
        <begin position="318"/>
        <end position="367"/>
    </location>
</feature>
<feature type="compositionally biased region" description="Basic and acidic residues" evidence="3">
    <location>
        <begin position="174"/>
        <end position="183"/>
    </location>
</feature>
<feature type="compositionally biased region" description="Polar residues" evidence="3">
    <location>
        <begin position="225"/>
        <end position="235"/>
    </location>
</feature>
<feature type="compositionally biased region" description="Basic and acidic residues" evidence="3">
    <location>
        <begin position="251"/>
        <end position="260"/>
    </location>
</feature>
<feature type="compositionally biased region" description="Polar residues" evidence="3">
    <location>
        <begin position="319"/>
        <end position="343"/>
    </location>
</feature>
<feature type="active site" description="Nucleophile" evidence="1 2">
    <location>
        <position position="149"/>
    </location>
</feature>
<feature type="active site" description="Proton acceptor" evidence="1 2">
    <location>
        <position position="619"/>
    </location>
</feature>
<feature type="modified residue" description="Phosphoserine" evidence="6">
    <location>
        <position position="198"/>
    </location>
</feature>
<feature type="sequence conflict" description="In Ref. 1; CAA84887." evidence="5" ref="1">
    <original>Q</original>
    <variation>H</variation>
    <location>
        <position position="180"/>
    </location>
</feature>
<sequence length="747" mass="83856">MIRRWLTISKSGKKKKAVNDTITEEVEKVDFKPVNHDINDELCYSESSDNPSSSLFVSNLDTKETFLNEDNNLQISSGLDYSSETCNQGSNYSQDGIFYISNAKAINAYGGIITQGPEAPILAMKVSDSMPYGDGSNKVFGYENFGNTCYCNSVLQCLYNLSSLRENILQFPKKSRESDQPRKKEMRGKKPRIFTEASFEKSIAGTNGHLPNPKPQSVDDGKPTPVNSVNSNTAGPSEKKSKFFKSFSAKHVQDNNKKEGSPAILTTGKPSSRPQDAPPLIVETPNEPGAPSRLSFENVTDRPPDVPRKIIVGRVLNYENPSRGSSNSNNLDLKGESNSSLSTPLDKKDTRRSSSSSQISPEHRKKSALIRGPVLNIDHSLNGSDKATLYSSLRDIFECITENTYLTGVVSPSSFVDVLKRENVLFNTTMHQDAHEFFNFLLNELSEYIERENKKIAASDINSDSEPSKSKNFISDLFQGTLTNQIKCLTCDNITSRDEPFLDFPIEVQGDEETDIQEILKSYHQREMLNGSNKFYCDECCGLQEAERLVGLKQLPDTLTLHLKRFKYSEKQNCNIKLFNNIHYPLTLNVCSSINSKVCQKYELAGIVVHMGGGPQHGHYVSLCKHEKFGWLLFDDETVEAVKEETVLEFTGESPNMATAYVLFYKAMYSNAVEKNDRENMAKEQDDNIDNLIKYDDWLRTCNSGQKKKEELPIADDLDTAIDDSFVSNTPIKSSKKKSRMFSFRKS</sequence>
<keyword id="KW-0378">Hydrolase</keyword>
<keyword id="KW-0597">Phosphoprotein</keyword>
<keyword id="KW-0645">Protease</keyword>
<keyword id="KW-1185">Reference proteome</keyword>
<keyword id="KW-0788">Thiol protease</keyword>
<keyword id="KW-0833">Ubl conjugation pathway</keyword>
<proteinExistence type="evidence at protein level"/>
<protein>
    <recommendedName>
        <fullName>Ubiquitin carboxyl-terminal hydrolase 13</fullName>
        <ecNumber>3.4.19.12</ecNumber>
    </recommendedName>
    <alternativeName>
        <fullName>Deubiquitinating enzyme 13</fullName>
    </alternativeName>
    <alternativeName>
        <fullName>Ubiquitin thioesterase 13</fullName>
    </alternativeName>
    <alternativeName>
        <fullName>Ubiquitin-specific-processing protease 13</fullName>
    </alternativeName>
</protein>
<accession>P38187</accession>
<accession>D6VPT4</accession>
<comment type="catalytic activity">
    <reaction>
        <text>Thiol-dependent hydrolysis of ester, thioester, amide, peptide and isopeptide bonds formed by the C-terminal Gly of ubiquitin (a 76-residue protein attached to proteins as an intracellular targeting signal).</text>
        <dbReference type="EC" id="3.4.19.12"/>
    </reaction>
</comment>
<comment type="miscellaneous">
    <text evidence="4">Present with 125 molecules/cell in log phase SD medium.</text>
</comment>
<comment type="similarity">
    <text evidence="5">Belongs to the peptidase C19 family.</text>
</comment>
<comment type="sequence caution" evidence="5">
    <conflict type="frameshift">
        <sequence resource="EMBL-CDS" id="CAA84887"/>
    </conflict>
</comment>
<evidence type="ECO:0000255" key="1">
    <source>
        <dbReference type="PROSITE-ProRule" id="PRU10092"/>
    </source>
</evidence>
<evidence type="ECO:0000255" key="2">
    <source>
        <dbReference type="PROSITE-ProRule" id="PRU10093"/>
    </source>
</evidence>
<evidence type="ECO:0000256" key="3">
    <source>
        <dbReference type="SAM" id="MobiDB-lite"/>
    </source>
</evidence>
<evidence type="ECO:0000269" key="4">
    <source>
    </source>
</evidence>
<evidence type="ECO:0000305" key="5"/>
<evidence type="ECO:0007744" key="6">
    <source>
    </source>
</evidence>
<dbReference type="EC" id="3.4.19.12"/>
<dbReference type="EMBL" id="Z35828">
    <property type="protein sequence ID" value="CAA84887.1"/>
    <property type="status" value="ALT_FRAME"/>
    <property type="molecule type" value="Genomic_DNA"/>
</dbReference>
<dbReference type="EMBL" id="BK006936">
    <property type="protein sequence ID" value="DAA07054.2"/>
    <property type="molecule type" value="Genomic_DNA"/>
</dbReference>
<dbReference type="PIR" id="S45803">
    <property type="entry name" value="S45803"/>
</dbReference>
<dbReference type="RefSeq" id="NP_009486.3">
    <property type="nucleotide sequence ID" value="NM_001178307.2"/>
</dbReference>
<dbReference type="SMR" id="P38187"/>
<dbReference type="BioGRID" id="32633">
    <property type="interactions" value="256"/>
</dbReference>
<dbReference type="DIP" id="DIP-795N"/>
<dbReference type="FunCoup" id="P38187">
    <property type="interactions" value="403"/>
</dbReference>
<dbReference type="IntAct" id="P38187">
    <property type="interactions" value="5"/>
</dbReference>
<dbReference type="MINT" id="P38187"/>
<dbReference type="STRING" id="4932.YBL067C"/>
<dbReference type="MEROPS" id="C19.100"/>
<dbReference type="iPTMnet" id="P38187"/>
<dbReference type="PaxDb" id="4932-YBL067C"/>
<dbReference type="PeptideAtlas" id="P38187"/>
<dbReference type="EnsemblFungi" id="YBL067C_mRNA">
    <property type="protein sequence ID" value="YBL067C"/>
    <property type="gene ID" value="YBL067C"/>
</dbReference>
<dbReference type="GeneID" id="852212"/>
<dbReference type="KEGG" id="sce:YBL067C"/>
<dbReference type="AGR" id="SGD:S000000163"/>
<dbReference type="SGD" id="S000000163">
    <property type="gene designation" value="UBP13"/>
</dbReference>
<dbReference type="VEuPathDB" id="FungiDB:YBL067C"/>
<dbReference type="eggNOG" id="KOG1864">
    <property type="taxonomic scope" value="Eukaryota"/>
</dbReference>
<dbReference type="GeneTree" id="ENSGT00940000176606"/>
<dbReference type="HOGENOM" id="CLU_008279_12_1_1"/>
<dbReference type="InParanoid" id="P38187"/>
<dbReference type="OMA" id="INDELCY"/>
<dbReference type="OrthoDB" id="27652at2759"/>
<dbReference type="BioCyc" id="YEAST:G3O-28963-MONOMER"/>
<dbReference type="BioGRID-ORCS" id="852212">
    <property type="hits" value="2 hits in 10 CRISPR screens"/>
</dbReference>
<dbReference type="PRO" id="PR:P38187"/>
<dbReference type="Proteomes" id="UP000002311">
    <property type="component" value="Chromosome II"/>
</dbReference>
<dbReference type="RNAct" id="P38187">
    <property type="molecule type" value="protein"/>
</dbReference>
<dbReference type="GO" id="GO:0005829">
    <property type="term" value="C:cytosol"/>
    <property type="evidence" value="ECO:0000318"/>
    <property type="project" value="GO_Central"/>
</dbReference>
<dbReference type="GO" id="GO:0005634">
    <property type="term" value="C:nucleus"/>
    <property type="evidence" value="ECO:0000318"/>
    <property type="project" value="GO_Central"/>
</dbReference>
<dbReference type="GO" id="GO:0004843">
    <property type="term" value="F:cysteine-type deubiquitinase activity"/>
    <property type="evidence" value="ECO:0000314"/>
    <property type="project" value="SGD"/>
</dbReference>
<dbReference type="GO" id="GO:0010995">
    <property type="term" value="P:free ubiquitin chain depolymerization"/>
    <property type="evidence" value="ECO:0000315"/>
    <property type="project" value="SGD"/>
</dbReference>
<dbReference type="GO" id="GO:0016579">
    <property type="term" value="P:protein deubiquitination"/>
    <property type="evidence" value="ECO:0007669"/>
    <property type="project" value="InterPro"/>
</dbReference>
<dbReference type="GO" id="GO:0006508">
    <property type="term" value="P:proteolysis"/>
    <property type="evidence" value="ECO:0007669"/>
    <property type="project" value="UniProtKB-KW"/>
</dbReference>
<dbReference type="GO" id="GO:0031647">
    <property type="term" value="P:regulation of protein stability"/>
    <property type="evidence" value="ECO:0000318"/>
    <property type="project" value="GO_Central"/>
</dbReference>
<dbReference type="CDD" id="cd02663">
    <property type="entry name" value="Peptidase_C19G"/>
    <property type="match status" value="1"/>
</dbReference>
<dbReference type="FunFam" id="3.90.70.10:FF:000131">
    <property type="entry name" value="Ubiquitin carboxyl-terminal hydrolase"/>
    <property type="match status" value="1"/>
</dbReference>
<dbReference type="Gene3D" id="3.90.70.10">
    <property type="entry name" value="Cysteine proteinases"/>
    <property type="match status" value="2"/>
</dbReference>
<dbReference type="InterPro" id="IPR038765">
    <property type="entry name" value="Papain-like_cys_pep_sf"/>
</dbReference>
<dbReference type="InterPro" id="IPR050164">
    <property type="entry name" value="Peptidase_C19"/>
</dbReference>
<dbReference type="InterPro" id="IPR001394">
    <property type="entry name" value="Peptidase_C19_UCH"/>
</dbReference>
<dbReference type="InterPro" id="IPR018200">
    <property type="entry name" value="USP_CS"/>
</dbReference>
<dbReference type="InterPro" id="IPR028889">
    <property type="entry name" value="USP_dom"/>
</dbReference>
<dbReference type="PANTHER" id="PTHR24006:SF733">
    <property type="entry name" value="RE52890P"/>
    <property type="match status" value="1"/>
</dbReference>
<dbReference type="PANTHER" id="PTHR24006">
    <property type="entry name" value="UBIQUITIN CARBOXYL-TERMINAL HYDROLASE"/>
    <property type="match status" value="1"/>
</dbReference>
<dbReference type="Pfam" id="PF00443">
    <property type="entry name" value="UCH"/>
    <property type="match status" value="1"/>
</dbReference>
<dbReference type="SUPFAM" id="SSF54001">
    <property type="entry name" value="Cysteine proteinases"/>
    <property type="match status" value="1"/>
</dbReference>
<dbReference type="PROSITE" id="PS00972">
    <property type="entry name" value="USP_1"/>
    <property type="match status" value="1"/>
</dbReference>
<dbReference type="PROSITE" id="PS00973">
    <property type="entry name" value="USP_2"/>
    <property type="match status" value="1"/>
</dbReference>
<dbReference type="PROSITE" id="PS50235">
    <property type="entry name" value="USP_3"/>
    <property type="match status" value="1"/>
</dbReference>
<name>UBP13_YEAST</name>
<gene>
    <name type="primary">UBP13</name>
    <name type="ordered locus">YBL067C</name>
    <name type="ORF">YBL0621</name>
</gene>
<organism>
    <name type="scientific">Saccharomyces cerevisiae (strain ATCC 204508 / S288c)</name>
    <name type="common">Baker's yeast</name>
    <dbReference type="NCBI Taxonomy" id="559292"/>
    <lineage>
        <taxon>Eukaryota</taxon>
        <taxon>Fungi</taxon>
        <taxon>Dikarya</taxon>
        <taxon>Ascomycota</taxon>
        <taxon>Saccharomycotina</taxon>
        <taxon>Saccharomycetes</taxon>
        <taxon>Saccharomycetales</taxon>
        <taxon>Saccharomycetaceae</taxon>
        <taxon>Saccharomyces</taxon>
    </lineage>
</organism>
<reference key="1">
    <citation type="journal article" date="1994" name="EMBO J.">
        <title>Complete DNA sequence of yeast chromosome II.</title>
        <authorList>
            <person name="Feldmann H."/>
            <person name="Aigle M."/>
            <person name="Aljinovic G."/>
            <person name="Andre B."/>
            <person name="Baclet M.C."/>
            <person name="Barthe C."/>
            <person name="Baur A."/>
            <person name="Becam A.-M."/>
            <person name="Biteau N."/>
            <person name="Boles E."/>
            <person name="Brandt T."/>
            <person name="Brendel M."/>
            <person name="Brueckner M."/>
            <person name="Bussereau F."/>
            <person name="Christiansen C."/>
            <person name="Contreras R."/>
            <person name="Crouzet M."/>
            <person name="Cziepluch C."/>
            <person name="Demolis N."/>
            <person name="Delaveau T."/>
            <person name="Doignon F."/>
            <person name="Domdey H."/>
            <person name="Duesterhus S."/>
            <person name="Dubois E."/>
            <person name="Dujon B."/>
            <person name="El Bakkoury M."/>
            <person name="Entian K.-D."/>
            <person name="Feuermann M."/>
            <person name="Fiers W."/>
            <person name="Fobo G.M."/>
            <person name="Fritz C."/>
            <person name="Gassenhuber J."/>
            <person name="Glansdorff N."/>
            <person name="Goffeau A."/>
            <person name="Grivell L.A."/>
            <person name="de Haan M."/>
            <person name="Hein C."/>
            <person name="Herbert C.J."/>
            <person name="Hollenberg C.P."/>
            <person name="Holmstroem K."/>
            <person name="Jacq C."/>
            <person name="Jacquet M."/>
            <person name="Jauniaux J.-C."/>
            <person name="Jonniaux J.-L."/>
            <person name="Kallesoee T."/>
            <person name="Kiesau P."/>
            <person name="Kirchrath L."/>
            <person name="Koetter P."/>
            <person name="Korol S."/>
            <person name="Liebl S."/>
            <person name="Logghe M."/>
            <person name="Lohan A.J.E."/>
            <person name="Louis E.J."/>
            <person name="Li Z.Y."/>
            <person name="Maat M.J."/>
            <person name="Mallet L."/>
            <person name="Mannhaupt G."/>
            <person name="Messenguy F."/>
            <person name="Miosga T."/>
            <person name="Molemans F."/>
            <person name="Mueller S."/>
            <person name="Nasr F."/>
            <person name="Obermaier B."/>
            <person name="Perea J."/>
            <person name="Pierard A."/>
            <person name="Piravandi E."/>
            <person name="Pohl F.M."/>
            <person name="Pohl T.M."/>
            <person name="Potier S."/>
            <person name="Proft M."/>
            <person name="Purnelle B."/>
            <person name="Ramezani Rad M."/>
            <person name="Rieger M."/>
            <person name="Rose M."/>
            <person name="Schaaff-Gerstenschlaeger I."/>
            <person name="Scherens B."/>
            <person name="Schwarzlose C."/>
            <person name="Skala J."/>
            <person name="Slonimski P.P."/>
            <person name="Smits P.H.M."/>
            <person name="Souciet J.-L."/>
            <person name="Steensma H.Y."/>
            <person name="Stucka R."/>
            <person name="Urrestarazu L.A."/>
            <person name="van der Aart Q.J.M."/>
            <person name="Van Dyck L."/>
            <person name="Vassarotti A."/>
            <person name="Vetter I."/>
            <person name="Vierendeels F."/>
            <person name="Vissers S."/>
            <person name="Wagner G."/>
            <person name="de Wergifosse P."/>
            <person name="Wolfe K.H."/>
            <person name="Zagulski M."/>
            <person name="Zimmermann F.K."/>
            <person name="Mewes H.-W."/>
            <person name="Kleine K."/>
        </authorList>
    </citation>
    <scope>NUCLEOTIDE SEQUENCE [LARGE SCALE GENOMIC DNA]</scope>
    <source>
        <strain>ATCC 204508 / S288c</strain>
    </source>
</reference>
<reference key="2">
    <citation type="journal article" date="2014" name="G3 (Bethesda)">
        <title>The reference genome sequence of Saccharomyces cerevisiae: Then and now.</title>
        <authorList>
            <person name="Engel S.R."/>
            <person name="Dietrich F.S."/>
            <person name="Fisk D.G."/>
            <person name="Binkley G."/>
            <person name="Balakrishnan R."/>
            <person name="Costanzo M.C."/>
            <person name="Dwight S.S."/>
            <person name="Hitz B.C."/>
            <person name="Karra K."/>
            <person name="Nash R.S."/>
            <person name="Weng S."/>
            <person name="Wong E.D."/>
            <person name="Lloyd P."/>
            <person name="Skrzypek M.S."/>
            <person name="Miyasato S.R."/>
            <person name="Simison M."/>
            <person name="Cherry J.M."/>
        </authorList>
    </citation>
    <scope>GENOME REANNOTATION</scope>
    <scope>SEQUENCE REVISION TO 180</scope>
    <source>
        <strain>ATCC 204508 / S288c</strain>
    </source>
</reference>
<reference key="3">
    <citation type="journal article" date="2003" name="Nature">
        <title>Sequencing and comparison of yeast species to identify genes and regulatory elements.</title>
        <authorList>
            <person name="Kellis M."/>
            <person name="Patterson N."/>
            <person name="Endrizzi M."/>
            <person name="Birren B.W."/>
            <person name="Lander E.S."/>
        </authorList>
    </citation>
    <scope>IDENTIFICATION OF FRAMESHIFT</scope>
</reference>
<reference key="4">
    <citation type="journal article" date="2003" name="Nature">
        <title>Global analysis of protein expression in yeast.</title>
        <authorList>
            <person name="Ghaemmaghami S."/>
            <person name="Huh W.-K."/>
            <person name="Bower K."/>
            <person name="Howson R.W."/>
            <person name="Belle A."/>
            <person name="Dephoure N."/>
            <person name="O'Shea E.K."/>
            <person name="Weissman J.S."/>
        </authorList>
    </citation>
    <scope>LEVEL OF PROTEIN EXPRESSION [LARGE SCALE ANALYSIS]</scope>
</reference>
<reference key="5">
    <citation type="journal article" date="2007" name="Proc. Natl. Acad. Sci. U.S.A.">
        <title>Analysis of phosphorylation sites on proteins from Saccharomyces cerevisiae by electron transfer dissociation (ETD) mass spectrometry.</title>
        <authorList>
            <person name="Chi A."/>
            <person name="Huttenhower C."/>
            <person name="Geer L.Y."/>
            <person name="Coon J.J."/>
            <person name="Syka J.E.P."/>
            <person name="Bai D.L."/>
            <person name="Shabanowitz J."/>
            <person name="Burke D.J."/>
            <person name="Troyanskaya O.G."/>
            <person name="Hunt D.F."/>
        </authorList>
    </citation>
    <scope>PHOSPHORYLATION [LARGE SCALE ANALYSIS] AT SER-198</scope>
    <scope>IDENTIFICATION BY MASS SPECTROMETRY [LARGE SCALE ANALYSIS]</scope>
</reference>
<reference key="6">
    <citation type="journal article" date="2008" name="Mol. Cell. Proteomics">
        <title>A multidimensional chromatography technology for in-depth phosphoproteome analysis.</title>
        <authorList>
            <person name="Albuquerque C.P."/>
            <person name="Smolka M.B."/>
            <person name="Payne S.H."/>
            <person name="Bafna V."/>
            <person name="Eng J."/>
            <person name="Zhou H."/>
        </authorList>
    </citation>
    <scope>IDENTIFICATION BY MASS SPECTROMETRY [LARGE SCALE ANALYSIS]</scope>
</reference>
<reference key="7">
    <citation type="journal article" date="2009" name="Science">
        <title>Global analysis of Cdk1 substrate phosphorylation sites provides insights into evolution.</title>
        <authorList>
            <person name="Holt L.J."/>
            <person name="Tuch B.B."/>
            <person name="Villen J."/>
            <person name="Johnson A.D."/>
            <person name="Gygi S.P."/>
            <person name="Morgan D.O."/>
        </authorList>
    </citation>
    <scope>IDENTIFICATION BY MASS SPECTROMETRY [LARGE SCALE ANALYSIS]</scope>
</reference>